<protein>
    <recommendedName>
        <fullName evidence="1">tRNA modification GTPase MnmE</fullName>
        <ecNumber evidence="1">3.6.-.-</ecNumber>
    </recommendedName>
</protein>
<comment type="function">
    <text evidence="1">Exhibits a very high intrinsic GTPase hydrolysis rate. Involved in the addition of a carboxymethylaminomethyl (cmnm) group at the wobble position (U34) of certain tRNAs, forming tRNA-cmnm(5)s(2)U34.</text>
</comment>
<comment type="cofactor">
    <cofactor evidence="1">
        <name>K(+)</name>
        <dbReference type="ChEBI" id="CHEBI:29103"/>
    </cofactor>
    <text evidence="1">Binds 1 potassium ion per subunit.</text>
</comment>
<comment type="subunit">
    <text evidence="1">Homodimer. Heterotetramer of two MnmE and two MnmG subunits.</text>
</comment>
<comment type="subcellular location">
    <subcellularLocation>
        <location evidence="1">Cytoplasm</location>
    </subcellularLocation>
</comment>
<comment type="similarity">
    <text evidence="1">Belongs to the TRAFAC class TrmE-Era-EngA-EngB-Septin-like GTPase superfamily. TrmE GTPase family.</text>
</comment>
<name>MNME_AZOC5</name>
<reference key="1">
    <citation type="submission" date="2007-04" db="EMBL/GenBank/DDBJ databases">
        <title>Complete genome sequence of the nitrogen-fixing bacterium Azorhizobium caulinodans ORS571.</title>
        <authorList>
            <person name="Lee K.B."/>
            <person name="Backer P.D."/>
            <person name="Aono T."/>
            <person name="Liu C.T."/>
            <person name="Suzuki S."/>
            <person name="Suzuki T."/>
            <person name="Kaneko T."/>
            <person name="Yamada M."/>
            <person name="Tabata S."/>
            <person name="Kupfer D.M."/>
            <person name="Najar F.Z."/>
            <person name="Wiley G.B."/>
            <person name="Roe B."/>
            <person name="Binnewies T."/>
            <person name="Ussery D."/>
            <person name="Vereecke D."/>
            <person name="Gevers D."/>
            <person name="Holsters M."/>
            <person name="Oyaizu H."/>
        </authorList>
    </citation>
    <scope>NUCLEOTIDE SEQUENCE [LARGE SCALE GENOMIC DNA]</scope>
    <source>
        <strain>ATCC 43989 / DSM 5975 / JCM 20966 / LMG 6465 / NBRC 14845 / NCIMB 13405 / ORS 571</strain>
    </source>
</reference>
<evidence type="ECO:0000255" key="1">
    <source>
        <dbReference type="HAMAP-Rule" id="MF_00379"/>
    </source>
</evidence>
<gene>
    <name evidence="1" type="primary">mnmE</name>
    <name evidence="1" type="synonym">trmE</name>
    <name type="ordered locus">AZC_4708</name>
</gene>
<dbReference type="EC" id="3.6.-.-" evidence="1"/>
<dbReference type="EMBL" id="AP009384">
    <property type="protein sequence ID" value="BAF90706.1"/>
    <property type="molecule type" value="Genomic_DNA"/>
</dbReference>
<dbReference type="RefSeq" id="WP_012173227.1">
    <property type="nucleotide sequence ID" value="NC_009937.1"/>
</dbReference>
<dbReference type="SMR" id="A8I264"/>
<dbReference type="STRING" id="438753.AZC_4708"/>
<dbReference type="KEGG" id="azc:AZC_4708"/>
<dbReference type="eggNOG" id="COG0486">
    <property type="taxonomic scope" value="Bacteria"/>
</dbReference>
<dbReference type="HOGENOM" id="CLU_019624_3_1_5"/>
<dbReference type="Proteomes" id="UP000000270">
    <property type="component" value="Chromosome"/>
</dbReference>
<dbReference type="GO" id="GO:0005737">
    <property type="term" value="C:cytoplasm"/>
    <property type="evidence" value="ECO:0007669"/>
    <property type="project" value="UniProtKB-SubCell"/>
</dbReference>
<dbReference type="GO" id="GO:0005525">
    <property type="term" value="F:GTP binding"/>
    <property type="evidence" value="ECO:0007669"/>
    <property type="project" value="UniProtKB-UniRule"/>
</dbReference>
<dbReference type="GO" id="GO:0003924">
    <property type="term" value="F:GTPase activity"/>
    <property type="evidence" value="ECO:0007669"/>
    <property type="project" value="UniProtKB-UniRule"/>
</dbReference>
<dbReference type="GO" id="GO:0046872">
    <property type="term" value="F:metal ion binding"/>
    <property type="evidence" value="ECO:0007669"/>
    <property type="project" value="UniProtKB-KW"/>
</dbReference>
<dbReference type="GO" id="GO:0030488">
    <property type="term" value="P:tRNA methylation"/>
    <property type="evidence" value="ECO:0007669"/>
    <property type="project" value="TreeGrafter"/>
</dbReference>
<dbReference type="GO" id="GO:0002098">
    <property type="term" value="P:tRNA wobble uridine modification"/>
    <property type="evidence" value="ECO:0007669"/>
    <property type="project" value="TreeGrafter"/>
</dbReference>
<dbReference type="CDD" id="cd04164">
    <property type="entry name" value="trmE"/>
    <property type="match status" value="1"/>
</dbReference>
<dbReference type="CDD" id="cd14858">
    <property type="entry name" value="TrmE_N"/>
    <property type="match status" value="1"/>
</dbReference>
<dbReference type="FunFam" id="3.30.1360.120:FF:000007">
    <property type="entry name" value="tRNA modification GTPase GTPBP3, mitochondrial"/>
    <property type="match status" value="1"/>
</dbReference>
<dbReference type="Gene3D" id="3.40.50.300">
    <property type="entry name" value="P-loop containing nucleotide triphosphate hydrolases"/>
    <property type="match status" value="1"/>
</dbReference>
<dbReference type="Gene3D" id="3.30.1360.120">
    <property type="entry name" value="Probable tRNA modification gtpase trme, domain 1"/>
    <property type="match status" value="1"/>
</dbReference>
<dbReference type="Gene3D" id="1.20.120.430">
    <property type="entry name" value="tRNA modification GTPase MnmE domain 2"/>
    <property type="match status" value="1"/>
</dbReference>
<dbReference type="HAMAP" id="MF_00379">
    <property type="entry name" value="GTPase_MnmE"/>
    <property type="match status" value="1"/>
</dbReference>
<dbReference type="InterPro" id="IPR031168">
    <property type="entry name" value="G_TrmE"/>
</dbReference>
<dbReference type="InterPro" id="IPR006073">
    <property type="entry name" value="GTP-bd"/>
</dbReference>
<dbReference type="InterPro" id="IPR018948">
    <property type="entry name" value="GTP-bd_TrmE_N"/>
</dbReference>
<dbReference type="InterPro" id="IPR004520">
    <property type="entry name" value="GTPase_MnmE"/>
</dbReference>
<dbReference type="InterPro" id="IPR027368">
    <property type="entry name" value="MnmE_dom2"/>
</dbReference>
<dbReference type="InterPro" id="IPR025867">
    <property type="entry name" value="MnmE_helical"/>
</dbReference>
<dbReference type="InterPro" id="IPR027417">
    <property type="entry name" value="P-loop_NTPase"/>
</dbReference>
<dbReference type="InterPro" id="IPR005225">
    <property type="entry name" value="Small_GTP-bd"/>
</dbReference>
<dbReference type="InterPro" id="IPR027266">
    <property type="entry name" value="TrmE/GcvT_dom1"/>
</dbReference>
<dbReference type="NCBIfam" id="NF003661">
    <property type="entry name" value="PRK05291.1-3"/>
    <property type="match status" value="1"/>
</dbReference>
<dbReference type="NCBIfam" id="TIGR00231">
    <property type="entry name" value="small_GTP"/>
    <property type="match status" value="1"/>
</dbReference>
<dbReference type="PANTHER" id="PTHR42714">
    <property type="entry name" value="TRNA MODIFICATION GTPASE GTPBP3"/>
    <property type="match status" value="1"/>
</dbReference>
<dbReference type="PANTHER" id="PTHR42714:SF2">
    <property type="entry name" value="TRNA MODIFICATION GTPASE GTPBP3, MITOCHONDRIAL"/>
    <property type="match status" value="1"/>
</dbReference>
<dbReference type="Pfam" id="PF01926">
    <property type="entry name" value="MMR_HSR1"/>
    <property type="match status" value="1"/>
</dbReference>
<dbReference type="Pfam" id="PF12631">
    <property type="entry name" value="MnmE_helical"/>
    <property type="match status" value="1"/>
</dbReference>
<dbReference type="Pfam" id="PF10396">
    <property type="entry name" value="TrmE_N"/>
    <property type="match status" value="1"/>
</dbReference>
<dbReference type="SUPFAM" id="SSF52540">
    <property type="entry name" value="P-loop containing nucleoside triphosphate hydrolases"/>
    <property type="match status" value="1"/>
</dbReference>
<dbReference type="SUPFAM" id="SSF116878">
    <property type="entry name" value="TrmE connector domain"/>
    <property type="match status" value="1"/>
</dbReference>
<dbReference type="PROSITE" id="PS51709">
    <property type="entry name" value="G_TRME"/>
    <property type="match status" value="1"/>
</dbReference>
<feature type="chain" id="PRO_0000345710" description="tRNA modification GTPase MnmE">
    <location>
        <begin position="1"/>
        <end position="435"/>
    </location>
</feature>
<feature type="domain" description="TrmE-type G">
    <location>
        <begin position="219"/>
        <end position="360"/>
    </location>
</feature>
<feature type="binding site" evidence="1">
    <location>
        <position position="24"/>
    </location>
    <ligand>
        <name>(6S)-5-formyl-5,6,7,8-tetrahydrofolate</name>
        <dbReference type="ChEBI" id="CHEBI:57457"/>
    </ligand>
</feature>
<feature type="binding site" evidence="1">
    <location>
        <position position="82"/>
    </location>
    <ligand>
        <name>(6S)-5-formyl-5,6,7,8-tetrahydrofolate</name>
        <dbReference type="ChEBI" id="CHEBI:57457"/>
    </ligand>
</feature>
<feature type="binding site" evidence="1">
    <location>
        <position position="122"/>
    </location>
    <ligand>
        <name>(6S)-5-formyl-5,6,7,8-tetrahydrofolate</name>
        <dbReference type="ChEBI" id="CHEBI:57457"/>
    </ligand>
</feature>
<feature type="binding site" evidence="1">
    <location>
        <begin position="229"/>
        <end position="234"/>
    </location>
    <ligand>
        <name>GTP</name>
        <dbReference type="ChEBI" id="CHEBI:37565"/>
    </ligand>
</feature>
<feature type="binding site" evidence="1">
    <location>
        <position position="229"/>
    </location>
    <ligand>
        <name>K(+)</name>
        <dbReference type="ChEBI" id="CHEBI:29103"/>
    </ligand>
</feature>
<feature type="binding site" evidence="1">
    <location>
        <position position="233"/>
    </location>
    <ligand>
        <name>Mg(2+)</name>
        <dbReference type="ChEBI" id="CHEBI:18420"/>
    </ligand>
</feature>
<feature type="binding site" evidence="1">
    <location>
        <begin position="248"/>
        <end position="254"/>
    </location>
    <ligand>
        <name>GTP</name>
        <dbReference type="ChEBI" id="CHEBI:37565"/>
    </ligand>
</feature>
<feature type="binding site" evidence="1">
    <location>
        <position position="248"/>
    </location>
    <ligand>
        <name>K(+)</name>
        <dbReference type="ChEBI" id="CHEBI:29103"/>
    </ligand>
</feature>
<feature type="binding site" evidence="1">
    <location>
        <position position="250"/>
    </location>
    <ligand>
        <name>K(+)</name>
        <dbReference type="ChEBI" id="CHEBI:29103"/>
    </ligand>
</feature>
<feature type="binding site" evidence="1">
    <location>
        <position position="253"/>
    </location>
    <ligand>
        <name>K(+)</name>
        <dbReference type="ChEBI" id="CHEBI:29103"/>
    </ligand>
</feature>
<feature type="binding site" evidence="1">
    <location>
        <position position="254"/>
    </location>
    <ligand>
        <name>Mg(2+)</name>
        <dbReference type="ChEBI" id="CHEBI:18420"/>
    </ligand>
</feature>
<feature type="binding site" evidence="1">
    <location>
        <begin position="273"/>
        <end position="276"/>
    </location>
    <ligand>
        <name>GTP</name>
        <dbReference type="ChEBI" id="CHEBI:37565"/>
    </ligand>
</feature>
<feature type="binding site" evidence="1">
    <location>
        <position position="435"/>
    </location>
    <ligand>
        <name>(6S)-5-formyl-5,6,7,8-tetrahydrofolate</name>
        <dbReference type="ChEBI" id="CHEBI:57457"/>
    </ligand>
</feature>
<sequence>MTRSSDTIFALSSGRVPSGVAVVRASGPRAREAGLALAGLVPPPRVARYVALREPGTGDLLDRGLILFFPGPRSATGEDTLELHLHGGPAVVTAVLRTLVKLPGFRPAAAGEFTRRAHANGKMDLAEVEGLADLIVAESEAQRRQALAQSSGALSRAVAGWRERLIRALALVEATIDFSDEGDVPDDLTGPARAEAAALCTELTTALADADRGERVRDGFIIAIAGPPNAGKSTLLNRLAGREAAIVSPVPGTTRDVLEVHLHLAGQAVTLVDTAGLRETDDLVEAEGVRRARVRAEGSDLVLWLSDDGTAPPTDMPAPLRVRTKADVTGAEGEEDEIVISAQTGAGINTLIAEMERRLGEMGGGEPALVTRERQRHALSDALYELDAALAIQTHDEDLMAEHLRLAARALDQVVGRVDVEDVLESLFRTFCIGK</sequence>
<proteinExistence type="inferred from homology"/>
<organism>
    <name type="scientific">Azorhizobium caulinodans (strain ATCC 43989 / DSM 5975 / JCM 20966 / LMG 6465 / NBRC 14845 / NCIMB 13405 / ORS 571)</name>
    <dbReference type="NCBI Taxonomy" id="438753"/>
    <lineage>
        <taxon>Bacteria</taxon>
        <taxon>Pseudomonadati</taxon>
        <taxon>Pseudomonadota</taxon>
        <taxon>Alphaproteobacteria</taxon>
        <taxon>Hyphomicrobiales</taxon>
        <taxon>Xanthobacteraceae</taxon>
        <taxon>Azorhizobium</taxon>
    </lineage>
</organism>
<accession>A8I264</accession>
<keyword id="KW-0963">Cytoplasm</keyword>
<keyword id="KW-0342">GTP-binding</keyword>
<keyword id="KW-0378">Hydrolase</keyword>
<keyword id="KW-0460">Magnesium</keyword>
<keyword id="KW-0479">Metal-binding</keyword>
<keyword id="KW-0547">Nucleotide-binding</keyword>
<keyword id="KW-0630">Potassium</keyword>
<keyword id="KW-1185">Reference proteome</keyword>
<keyword id="KW-0819">tRNA processing</keyword>